<gene>
    <name evidence="1" type="primary">rplP</name>
    <name evidence="1" type="synonym">rpl16</name>
    <name type="ordered locus">Cyan7425_1299</name>
</gene>
<reference key="1">
    <citation type="journal article" date="2011" name="MBio">
        <title>Novel metabolic attributes of the genus Cyanothece, comprising a group of unicellular nitrogen-fixing Cyanobacteria.</title>
        <authorList>
            <person name="Bandyopadhyay A."/>
            <person name="Elvitigala T."/>
            <person name="Welsh E."/>
            <person name="Stockel J."/>
            <person name="Liberton M."/>
            <person name="Min H."/>
            <person name="Sherman L.A."/>
            <person name="Pakrasi H.B."/>
        </authorList>
    </citation>
    <scope>NUCLEOTIDE SEQUENCE [LARGE SCALE GENOMIC DNA]</scope>
    <source>
        <strain>PCC 7425 / ATCC 29141</strain>
    </source>
</reference>
<organism>
    <name type="scientific">Cyanothece sp. (strain PCC 7425 / ATCC 29141)</name>
    <dbReference type="NCBI Taxonomy" id="395961"/>
    <lineage>
        <taxon>Bacteria</taxon>
        <taxon>Bacillati</taxon>
        <taxon>Cyanobacteriota</taxon>
        <taxon>Cyanophyceae</taxon>
        <taxon>Gomontiellales</taxon>
        <taxon>Cyanothecaceae</taxon>
        <taxon>Cyanothece</taxon>
    </lineage>
</organism>
<accession>B8HMR1</accession>
<dbReference type="EMBL" id="CP001344">
    <property type="protein sequence ID" value="ACL43676.1"/>
    <property type="molecule type" value="Genomic_DNA"/>
</dbReference>
<dbReference type="SMR" id="B8HMR1"/>
<dbReference type="STRING" id="395961.Cyan7425_1299"/>
<dbReference type="KEGG" id="cyn:Cyan7425_1299"/>
<dbReference type="eggNOG" id="COG0197">
    <property type="taxonomic scope" value="Bacteria"/>
</dbReference>
<dbReference type="HOGENOM" id="CLU_078858_2_1_3"/>
<dbReference type="OrthoDB" id="9802589at2"/>
<dbReference type="GO" id="GO:0022625">
    <property type="term" value="C:cytosolic large ribosomal subunit"/>
    <property type="evidence" value="ECO:0007669"/>
    <property type="project" value="TreeGrafter"/>
</dbReference>
<dbReference type="GO" id="GO:0019843">
    <property type="term" value="F:rRNA binding"/>
    <property type="evidence" value="ECO:0007669"/>
    <property type="project" value="UniProtKB-UniRule"/>
</dbReference>
<dbReference type="GO" id="GO:0003735">
    <property type="term" value="F:structural constituent of ribosome"/>
    <property type="evidence" value="ECO:0007669"/>
    <property type="project" value="InterPro"/>
</dbReference>
<dbReference type="GO" id="GO:0000049">
    <property type="term" value="F:tRNA binding"/>
    <property type="evidence" value="ECO:0007669"/>
    <property type="project" value="UniProtKB-KW"/>
</dbReference>
<dbReference type="GO" id="GO:0006412">
    <property type="term" value="P:translation"/>
    <property type="evidence" value="ECO:0007669"/>
    <property type="project" value="UniProtKB-UniRule"/>
</dbReference>
<dbReference type="CDD" id="cd01433">
    <property type="entry name" value="Ribosomal_L16_L10e"/>
    <property type="match status" value="1"/>
</dbReference>
<dbReference type="FunFam" id="3.90.1170.10:FF:000001">
    <property type="entry name" value="50S ribosomal protein L16"/>
    <property type="match status" value="1"/>
</dbReference>
<dbReference type="Gene3D" id="3.90.1170.10">
    <property type="entry name" value="Ribosomal protein L10e/L16"/>
    <property type="match status" value="1"/>
</dbReference>
<dbReference type="HAMAP" id="MF_01342">
    <property type="entry name" value="Ribosomal_uL16"/>
    <property type="match status" value="1"/>
</dbReference>
<dbReference type="InterPro" id="IPR047873">
    <property type="entry name" value="Ribosomal_uL16"/>
</dbReference>
<dbReference type="InterPro" id="IPR000114">
    <property type="entry name" value="Ribosomal_uL16_bact-type"/>
</dbReference>
<dbReference type="InterPro" id="IPR020798">
    <property type="entry name" value="Ribosomal_uL16_CS"/>
</dbReference>
<dbReference type="InterPro" id="IPR016180">
    <property type="entry name" value="Ribosomal_uL16_dom"/>
</dbReference>
<dbReference type="InterPro" id="IPR036920">
    <property type="entry name" value="Ribosomal_uL16_sf"/>
</dbReference>
<dbReference type="NCBIfam" id="TIGR01164">
    <property type="entry name" value="rplP_bact"/>
    <property type="match status" value="1"/>
</dbReference>
<dbReference type="PANTHER" id="PTHR12220">
    <property type="entry name" value="50S/60S RIBOSOMAL PROTEIN L16"/>
    <property type="match status" value="1"/>
</dbReference>
<dbReference type="PANTHER" id="PTHR12220:SF13">
    <property type="entry name" value="LARGE RIBOSOMAL SUBUNIT PROTEIN UL16M"/>
    <property type="match status" value="1"/>
</dbReference>
<dbReference type="Pfam" id="PF00252">
    <property type="entry name" value="Ribosomal_L16"/>
    <property type="match status" value="1"/>
</dbReference>
<dbReference type="PRINTS" id="PR00060">
    <property type="entry name" value="RIBOSOMALL16"/>
</dbReference>
<dbReference type="SUPFAM" id="SSF54686">
    <property type="entry name" value="Ribosomal protein L16p/L10e"/>
    <property type="match status" value="1"/>
</dbReference>
<dbReference type="PROSITE" id="PS00586">
    <property type="entry name" value="RIBOSOMAL_L16_1"/>
    <property type="match status" value="1"/>
</dbReference>
<dbReference type="PROSITE" id="PS00701">
    <property type="entry name" value="RIBOSOMAL_L16_2"/>
    <property type="match status" value="1"/>
</dbReference>
<protein>
    <recommendedName>
        <fullName evidence="1">Large ribosomal subunit protein uL16</fullName>
    </recommendedName>
    <alternativeName>
        <fullName evidence="3">50S ribosomal protein L16</fullName>
    </alternativeName>
</protein>
<name>RL16_CYAP4</name>
<feature type="chain" id="PRO_1000166353" description="Large ribosomal subunit protein uL16">
    <location>
        <begin position="1"/>
        <end position="140"/>
    </location>
</feature>
<feature type="region of interest" description="Disordered" evidence="2">
    <location>
        <begin position="1"/>
        <end position="22"/>
    </location>
</feature>
<feature type="compositionally biased region" description="Basic residues" evidence="2">
    <location>
        <begin position="1"/>
        <end position="14"/>
    </location>
</feature>
<comment type="function">
    <text evidence="1">Binds 23S rRNA and is also seen to make contacts with the A and possibly P site tRNAs.</text>
</comment>
<comment type="subunit">
    <text evidence="1">Part of the 50S ribosomal subunit.</text>
</comment>
<comment type="similarity">
    <text evidence="1">Belongs to the universal ribosomal protein uL16 family.</text>
</comment>
<sequence length="140" mass="15993">MLSPRRTKFRKQQRGRMEGAATRGNTLTFGDYGLQALEPAWITARQIEAGRRAMTRYIRRGGKIWIRLFPDKPVTMRPAETRMGSGKGAPEFWVAVVKPGRIMYEIAGVSEEVAREAIRLAAYKMPIKTKFIMRETTEES</sequence>
<proteinExistence type="inferred from homology"/>
<keyword id="KW-0687">Ribonucleoprotein</keyword>
<keyword id="KW-0689">Ribosomal protein</keyword>
<keyword id="KW-0694">RNA-binding</keyword>
<keyword id="KW-0699">rRNA-binding</keyword>
<keyword id="KW-0820">tRNA-binding</keyword>
<evidence type="ECO:0000255" key="1">
    <source>
        <dbReference type="HAMAP-Rule" id="MF_01342"/>
    </source>
</evidence>
<evidence type="ECO:0000256" key="2">
    <source>
        <dbReference type="SAM" id="MobiDB-lite"/>
    </source>
</evidence>
<evidence type="ECO:0000305" key="3"/>